<sequence length="864" mass="96200">MHERYVPADVEAAAQSDWRAADAYRSKEDANRKKFYCVSMLPYPSGKLHMGHVRNYTINDVMYRYLRMNGYNTLMPMGWDAFGMPAENAAMANGVPPAQWTYDNIAYMKKQMQSMGLAIDWSREVTTCKPDYYKWNQWLFLKMLEKGIAYKKTGTVNWDPVDQTVLANEQVIDGRGWRSGALVEKREIPMYYMRITQYADELLNDLDGLGWPERVKIMQQNWIGKSFGVNFGFPYELDGEKKLLRVFTTRADTIMGVTFCAIAAEHPLAARLAQDKPELQAFIDECKRGGVAEADIATMEKKGVATGFSVSHPLTGAPVEVWIGNYVLMSYGEGAVMGVPAHDERDFAFAKKYGLPIRQVIAVEGETYSTDAWQEWYGDKTRAVCVNSGKYDGLAYDAAVDAIAADLKAGGFGDKQITYRLRDWGISRQRYWGTPIPIIHCPSCGDVPVPEQDLPVVLPEDLVPDGTGNPLAKSDAFLNCACPKCGAAAKRETDTMDTFVDSAWYFSRYAAPDAQTMVDARTDYWMPMDQYIGGIEHAILHLLYSRFWAKVMRDLGLVAFGEPAKNLLTQGMVLNETFYREDAAGKKTWYNPADVTVSFDDKGRPVGAVLKADGQPVVLGGIEKMSKSKNNGVDPQMLIDHYGADTARLFTMFAAPPEQQLEWSGAGVDGASRFLRRVWAFGFANREALAVRAPFDVAQLAEADKTLRREIHGVLKQADFDYQRLQYNTVVSAAMKMLNAIEGAKGATPAVLRETYGVLLRVLYPVVPHVTYELWKALGYADEFGPLLDAPWPKVDEAALEQAEIELVLQINGKVRGALKVAKDASREAIEAAAVADEMFAKFAEGKPAKKIIVVPGRLVNVVV</sequence>
<organism>
    <name type="scientific">Burkholderia thailandensis (strain ATCC 700388 / DSM 13276 / CCUG 48851 / CIP 106301 / E264)</name>
    <dbReference type="NCBI Taxonomy" id="271848"/>
    <lineage>
        <taxon>Bacteria</taxon>
        <taxon>Pseudomonadati</taxon>
        <taxon>Pseudomonadota</taxon>
        <taxon>Betaproteobacteria</taxon>
        <taxon>Burkholderiales</taxon>
        <taxon>Burkholderiaceae</taxon>
        <taxon>Burkholderia</taxon>
        <taxon>pseudomallei group</taxon>
    </lineage>
</organism>
<gene>
    <name evidence="1" type="primary">leuS</name>
    <name type="ordered locus">BTH_I1211</name>
</gene>
<name>SYL_BURTA</name>
<comment type="catalytic activity">
    <reaction evidence="1">
        <text>tRNA(Leu) + L-leucine + ATP = L-leucyl-tRNA(Leu) + AMP + diphosphate</text>
        <dbReference type="Rhea" id="RHEA:11688"/>
        <dbReference type="Rhea" id="RHEA-COMP:9613"/>
        <dbReference type="Rhea" id="RHEA-COMP:9622"/>
        <dbReference type="ChEBI" id="CHEBI:30616"/>
        <dbReference type="ChEBI" id="CHEBI:33019"/>
        <dbReference type="ChEBI" id="CHEBI:57427"/>
        <dbReference type="ChEBI" id="CHEBI:78442"/>
        <dbReference type="ChEBI" id="CHEBI:78494"/>
        <dbReference type="ChEBI" id="CHEBI:456215"/>
        <dbReference type="EC" id="6.1.1.4"/>
    </reaction>
</comment>
<comment type="subcellular location">
    <subcellularLocation>
        <location evidence="1">Cytoplasm</location>
    </subcellularLocation>
</comment>
<comment type="similarity">
    <text evidence="1">Belongs to the class-I aminoacyl-tRNA synthetase family.</text>
</comment>
<comment type="sequence caution" evidence="2">
    <conflict type="erroneous initiation">
        <sequence resource="EMBL-CDS" id="ABC38901"/>
    </conflict>
</comment>
<evidence type="ECO:0000255" key="1">
    <source>
        <dbReference type="HAMAP-Rule" id="MF_00049"/>
    </source>
</evidence>
<evidence type="ECO:0000305" key="2"/>
<keyword id="KW-0030">Aminoacyl-tRNA synthetase</keyword>
<keyword id="KW-0067">ATP-binding</keyword>
<keyword id="KW-0963">Cytoplasm</keyword>
<keyword id="KW-0436">Ligase</keyword>
<keyword id="KW-0547">Nucleotide-binding</keyword>
<keyword id="KW-0648">Protein biosynthesis</keyword>
<feature type="chain" id="PRO_0000334737" description="Leucine--tRNA ligase">
    <location>
        <begin position="1"/>
        <end position="864"/>
    </location>
</feature>
<feature type="short sequence motif" description="'HIGH' region">
    <location>
        <begin position="42"/>
        <end position="52"/>
    </location>
</feature>
<feature type="short sequence motif" description="'KMSKS' region">
    <location>
        <begin position="624"/>
        <end position="628"/>
    </location>
</feature>
<feature type="binding site" evidence="1">
    <location>
        <position position="627"/>
    </location>
    <ligand>
        <name>ATP</name>
        <dbReference type="ChEBI" id="CHEBI:30616"/>
    </ligand>
</feature>
<accession>Q2SZ91</accession>
<proteinExistence type="inferred from homology"/>
<reference key="1">
    <citation type="journal article" date="2005" name="BMC Genomics">
        <title>Bacterial genome adaptation to niches: divergence of the potential virulence genes in three Burkholderia species of different survival strategies.</title>
        <authorList>
            <person name="Kim H.S."/>
            <person name="Schell M.A."/>
            <person name="Yu Y."/>
            <person name="Ulrich R.L."/>
            <person name="Sarria S.H."/>
            <person name="Nierman W.C."/>
            <person name="DeShazer D."/>
        </authorList>
    </citation>
    <scope>NUCLEOTIDE SEQUENCE [LARGE SCALE GENOMIC DNA]</scope>
    <source>
        <strain>ATCC 700388 / DSM 13276 / CCUG 48851 / CIP 106301 / E264</strain>
    </source>
</reference>
<protein>
    <recommendedName>
        <fullName evidence="1">Leucine--tRNA ligase</fullName>
        <ecNumber evidence="1">6.1.1.4</ecNumber>
    </recommendedName>
    <alternativeName>
        <fullName evidence="1">Leucyl-tRNA synthetase</fullName>
        <shortName evidence="1">LeuRS</shortName>
    </alternativeName>
</protein>
<dbReference type="EC" id="6.1.1.4" evidence="1"/>
<dbReference type="EMBL" id="CP000086">
    <property type="protein sequence ID" value="ABC38901.1"/>
    <property type="status" value="ALT_INIT"/>
    <property type="molecule type" value="Genomic_DNA"/>
</dbReference>
<dbReference type="RefSeq" id="WP_025369769.1">
    <property type="nucleotide sequence ID" value="NZ_CP008785.1"/>
</dbReference>
<dbReference type="SMR" id="Q2SZ91"/>
<dbReference type="GeneID" id="45120960"/>
<dbReference type="KEGG" id="bte:BTH_I1211"/>
<dbReference type="HOGENOM" id="CLU_004427_0_0_4"/>
<dbReference type="Proteomes" id="UP000001930">
    <property type="component" value="Chromosome I"/>
</dbReference>
<dbReference type="GO" id="GO:0005829">
    <property type="term" value="C:cytosol"/>
    <property type="evidence" value="ECO:0007669"/>
    <property type="project" value="TreeGrafter"/>
</dbReference>
<dbReference type="GO" id="GO:0002161">
    <property type="term" value="F:aminoacyl-tRNA deacylase activity"/>
    <property type="evidence" value="ECO:0007669"/>
    <property type="project" value="InterPro"/>
</dbReference>
<dbReference type="GO" id="GO:0005524">
    <property type="term" value="F:ATP binding"/>
    <property type="evidence" value="ECO:0007669"/>
    <property type="project" value="UniProtKB-UniRule"/>
</dbReference>
<dbReference type="GO" id="GO:0004823">
    <property type="term" value="F:leucine-tRNA ligase activity"/>
    <property type="evidence" value="ECO:0007669"/>
    <property type="project" value="UniProtKB-UniRule"/>
</dbReference>
<dbReference type="GO" id="GO:0006429">
    <property type="term" value="P:leucyl-tRNA aminoacylation"/>
    <property type="evidence" value="ECO:0007669"/>
    <property type="project" value="UniProtKB-UniRule"/>
</dbReference>
<dbReference type="CDD" id="cd07958">
    <property type="entry name" value="Anticodon_Ia_Leu_BEm"/>
    <property type="match status" value="1"/>
</dbReference>
<dbReference type="CDD" id="cd00812">
    <property type="entry name" value="LeuRS_core"/>
    <property type="match status" value="1"/>
</dbReference>
<dbReference type="FunFam" id="1.10.730.10:FF:000002">
    <property type="entry name" value="Leucine--tRNA ligase"/>
    <property type="match status" value="1"/>
</dbReference>
<dbReference type="FunFam" id="2.20.28.290:FF:000001">
    <property type="entry name" value="Leucine--tRNA ligase"/>
    <property type="match status" value="1"/>
</dbReference>
<dbReference type="FunFam" id="3.10.20.590:FF:000001">
    <property type="entry name" value="Leucine--tRNA ligase"/>
    <property type="match status" value="1"/>
</dbReference>
<dbReference type="FunFam" id="3.40.50.620:FF:000003">
    <property type="entry name" value="Leucine--tRNA ligase"/>
    <property type="match status" value="1"/>
</dbReference>
<dbReference type="FunFam" id="3.40.50.620:FF:000056">
    <property type="entry name" value="Leucine--tRNA ligase"/>
    <property type="match status" value="1"/>
</dbReference>
<dbReference type="FunFam" id="3.90.740.10:FF:000012">
    <property type="entry name" value="Leucine--tRNA ligase"/>
    <property type="match status" value="1"/>
</dbReference>
<dbReference type="Gene3D" id="2.20.28.290">
    <property type="match status" value="1"/>
</dbReference>
<dbReference type="Gene3D" id="3.10.20.590">
    <property type="match status" value="1"/>
</dbReference>
<dbReference type="Gene3D" id="3.40.50.620">
    <property type="entry name" value="HUPs"/>
    <property type="match status" value="2"/>
</dbReference>
<dbReference type="Gene3D" id="1.10.730.10">
    <property type="entry name" value="Isoleucyl-tRNA Synthetase, Domain 1"/>
    <property type="match status" value="2"/>
</dbReference>
<dbReference type="Gene3D" id="3.90.740.10">
    <property type="entry name" value="Valyl/Leucyl/Isoleucyl-tRNA synthetase, editing domain"/>
    <property type="match status" value="1"/>
</dbReference>
<dbReference type="HAMAP" id="MF_00049_B">
    <property type="entry name" value="Leu_tRNA_synth_B"/>
    <property type="match status" value="1"/>
</dbReference>
<dbReference type="InterPro" id="IPR001412">
    <property type="entry name" value="aa-tRNA-synth_I_CS"/>
</dbReference>
<dbReference type="InterPro" id="IPR002300">
    <property type="entry name" value="aa-tRNA-synth_Ia"/>
</dbReference>
<dbReference type="InterPro" id="IPR002302">
    <property type="entry name" value="Leu-tRNA-ligase"/>
</dbReference>
<dbReference type="InterPro" id="IPR025709">
    <property type="entry name" value="Leu_tRNA-synth_edit"/>
</dbReference>
<dbReference type="InterPro" id="IPR013155">
    <property type="entry name" value="M/V/L/I-tRNA-synth_anticd-bd"/>
</dbReference>
<dbReference type="InterPro" id="IPR015413">
    <property type="entry name" value="Methionyl/Leucyl_tRNA_Synth"/>
</dbReference>
<dbReference type="InterPro" id="IPR014729">
    <property type="entry name" value="Rossmann-like_a/b/a_fold"/>
</dbReference>
<dbReference type="InterPro" id="IPR009080">
    <property type="entry name" value="tRNAsynth_Ia_anticodon-bd"/>
</dbReference>
<dbReference type="InterPro" id="IPR009008">
    <property type="entry name" value="Val/Leu/Ile-tRNA-synth_edit"/>
</dbReference>
<dbReference type="NCBIfam" id="TIGR00396">
    <property type="entry name" value="leuS_bact"/>
    <property type="match status" value="1"/>
</dbReference>
<dbReference type="PANTHER" id="PTHR43740:SF2">
    <property type="entry name" value="LEUCINE--TRNA LIGASE, MITOCHONDRIAL"/>
    <property type="match status" value="1"/>
</dbReference>
<dbReference type="PANTHER" id="PTHR43740">
    <property type="entry name" value="LEUCYL-TRNA SYNTHETASE"/>
    <property type="match status" value="1"/>
</dbReference>
<dbReference type="Pfam" id="PF08264">
    <property type="entry name" value="Anticodon_1"/>
    <property type="match status" value="1"/>
</dbReference>
<dbReference type="Pfam" id="PF00133">
    <property type="entry name" value="tRNA-synt_1"/>
    <property type="match status" value="2"/>
</dbReference>
<dbReference type="Pfam" id="PF13603">
    <property type="entry name" value="tRNA-synt_1_2"/>
    <property type="match status" value="1"/>
</dbReference>
<dbReference type="Pfam" id="PF09334">
    <property type="entry name" value="tRNA-synt_1g"/>
    <property type="match status" value="1"/>
</dbReference>
<dbReference type="PRINTS" id="PR00985">
    <property type="entry name" value="TRNASYNTHLEU"/>
</dbReference>
<dbReference type="SUPFAM" id="SSF47323">
    <property type="entry name" value="Anticodon-binding domain of a subclass of class I aminoacyl-tRNA synthetases"/>
    <property type="match status" value="1"/>
</dbReference>
<dbReference type="SUPFAM" id="SSF52374">
    <property type="entry name" value="Nucleotidylyl transferase"/>
    <property type="match status" value="1"/>
</dbReference>
<dbReference type="SUPFAM" id="SSF50677">
    <property type="entry name" value="ValRS/IleRS/LeuRS editing domain"/>
    <property type="match status" value="1"/>
</dbReference>
<dbReference type="PROSITE" id="PS00178">
    <property type="entry name" value="AA_TRNA_LIGASE_I"/>
    <property type="match status" value="1"/>
</dbReference>